<name>SYR_STRT1</name>
<feature type="chain" id="PRO_0000242102" description="Arginine--tRNA ligase">
    <location>
        <begin position="1"/>
        <end position="563"/>
    </location>
</feature>
<feature type="short sequence motif" description="'HIGH' region">
    <location>
        <begin position="121"/>
        <end position="131"/>
    </location>
</feature>
<proteinExistence type="inferred from homology"/>
<keyword id="KW-0030">Aminoacyl-tRNA synthetase</keyword>
<keyword id="KW-0067">ATP-binding</keyword>
<keyword id="KW-0963">Cytoplasm</keyword>
<keyword id="KW-0436">Ligase</keyword>
<keyword id="KW-0547">Nucleotide-binding</keyword>
<keyword id="KW-0648">Protein biosynthesis</keyword>
<gene>
    <name evidence="1" type="primary">argS</name>
    <name type="ordered locus">str0047</name>
</gene>
<comment type="catalytic activity">
    <reaction evidence="1">
        <text>tRNA(Arg) + L-arginine + ATP = L-arginyl-tRNA(Arg) + AMP + diphosphate</text>
        <dbReference type="Rhea" id="RHEA:20301"/>
        <dbReference type="Rhea" id="RHEA-COMP:9658"/>
        <dbReference type="Rhea" id="RHEA-COMP:9673"/>
        <dbReference type="ChEBI" id="CHEBI:30616"/>
        <dbReference type="ChEBI" id="CHEBI:32682"/>
        <dbReference type="ChEBI" id="CHEBI:33019"/>
        <dbReference type="ChEBI" id="CHEBI:78442"/>
        <dbReference type="ChEBI" id="CHEBI:78513"/>
        <dbReference type="ChEBI" id="CHEBI:456215"/>
        <dbReference type="EC" id="6.1.1.19"/>
    </reaction>
</comment>
<comment type="subunit">
    <text evidence="1">Monomer.</text>
</comment>
<comment type="subcellular location">
    <subcellularLocation>
        <location evidence="1">Cytoplasm</location>
    </subcellularLocation>
</comment>
<comment type="similarity">
    <text evidence="1">Belongs to the class-I aminoacyl-tRNA synthetase family.</text>
</comment>
<evidence type="ECO:0000255" key="1">
    <source>
        <dbReference type="HAMAP-Rule" id="MF_00123"/>
    </source>
</evidence>
<accession>Q5M1Z3</accession>
<dbReference type="EC" id="6.1.1.19" evidence="1"/>
<dbReference type="EMBL" id="CP000024">
    <property type="protein sequence ID" value="AAV61664.1"/>
    <property type="molecule type" value="Genomic_DNA"/>
</dbReference>
<dbReference type="RefSeq" id="WP_011226739.1">
    <property type="nucleotide sequence ID" value="NC_006449.1"/>
</dbReference>
<dbReference type="SMR" id="Q5M1Z3"/>
<dbReference type="KEGG" id="stc:str0047"/>
<dbReference type="HOGENOM" id="CLU_006406_6_1_9"/>
<dbReference type="GO" id="GO:0005737">
    <property type="term" value="C:cytoplasm"/>
    <property type="evidence" value="ECO:0007669"/>
    <property type="project" value="UniProtKB-SubCell"/>
</dbReference>
<dbReference type="GO" id="GO:0004814">
    <property type="term" value="F:arginine-tRNA ligase activity"/>
    <property type="evidence" value="ECO:0007669"/>
    <property type="project" value="UniProtKB-UniRule"/>
</dbReference>
<dbReference type="GO" id="GO:0005524">
    <property type="term" value="F:ATP binding"/>
    <property type="evidence" value="ECO:0007669"/>
    <property type="project" value="UniProtKB-UniRule"/>
</dbReference>
<dbReference type="GO" id="GO:0006420">
    <property type="term" value="P:arginyl-tRNA aminoacylation"/>
    <property type="evidence" value="ECO:0007669"/>
    <property type="project" value="UniProtKB-UniRule"/>
</dbReference>
<dbReference type="CDD" id="cd07956">
    <property type="entry name" value="Anticodon_Ia_Arg"/>
    <property type="match status" value="1"/>
</dbReference>
<dbReference type="CDD" id="cd00671">
    <property type="entry name" value="ArgRS_core"/>
    <property type="match status" value="1"/>
</dbReference>
<dbReference type="FunFam" id="3.40.50.620:FF:000116">
    <property type="entry name" value="Arginine--tRNA ligase"/>
    <property type="match status" value="1"/>
</dbReference>
<dbReference type="FunFam" id="1.10.730.10:FF:000006">
    <property type="entry name" value="Arginyl-tRNA synthetase 2, mitochondrial"/>
    <property type="match status" value="1"/>
</dbReference>
<dbReference type="Gene3D" id="3.30.1360.70">
    <property type="entry name" value="Arginyl tRNA synthetase N-terminal domain"/>
    <property type="match status" value="1"/>
</dbReference>
<dbReference type="Gene3D" id="3.40.50.620">
    <property type="entry name" value="HUPs"/>
    <property type="match status" value="1"/>
</dbReference>
<dbReference type="Gene3D" id="1.10.730.10">
    <property type="entry name" value="Isoleucyl-tRNA Synthetase, Domain 1"/>
    <property type="match status" value="1"/>
</dbReference>
<dbReference type="HAMAP" id="MF_00123">
    <property type="entry name" value="Arg_tRNA_synth"/>
    <property type="match status" value="1"/>
</dbReference>
<dbReference type="InterPro" id="IPR001278">
    <property type="entry name" value="Arg-tRNA-ligase"/>
</dbReference>
<dbReference type="InterPro" id="IPR005148">
    <property type="entry name" value="Arg-tRNA-synth_N"/>
</dbReference>
<dbReference type="InterPro" id="IPR036695">
    <property type="entry name" value="Arg-tRNA-synth_N_sf"/>
</dbReference>
<dbReference type="InterPro" id="IPR035684">
    <property type="entry name" value="ArgRS_core"/>
</dbReference>
<dbReference type="InterPro" id="IPR008909">
    <property type="entry name" value="DALR_anticod-bd"/>
</dbReference>
<dbReference type="InterPro" id="IPR014729">
    <property type="entry name" value="Rossmann-like_a/b/a_fold"/>
</dbReference>
<dbReference type="InterPro" id="IPR009080">
    <property type="entry name" value="tRNAsynth_Ia_anticodon-bd"/>
</dbReference>
<dbReference type="NCBIfam" id="TIGR00456">
    <property type="entry name" value="argS"/>
    <property type="match status" value="1"/>
</dbReference>
<dbReference type="PANTHER" id="PTHR11956:SF5">
    <property type="entry name" value="ARGININE--TRNA LIGASE, CYTOPLASMIC"/>
    <property type="match status" value="1"/>
</dbReference>
<dbReference type="PANTHER" id="PTHR11956">
    <property type="entry name" value="ARGINYL-TRNA SYNTHETASE"/>
    <property type="match status" value="1"/>
</dbReference>
<dbReference type="Pfam" id="PF03485">
    <property type="entry name" value="Arg_tRNA_synt_N"/>
    <property type="match status" value="1"/>
</dbReference>
<dbReference type="Pfam" id="PF05746">
    <property type="entry name" value="DALR_1"/>
    <property type="match status" value="1"/>
</dbReference>
<dbReference type="Pfam" id="PF00750">
    <property type="entry name" value="tRNA-synt_1d"/>
    <property type="match status" value="1"/>
</dbReference>
<dbReference type="PRINTS" id="PR01038">
    <property type="entry name" value="TRNASYNTHARG"/>
</dbReference>
<dbReference type="SMART" id="SM01016">
    <property type="entry name" value="Arg_tRNA_synt_N"/>
    <property type="match status" value="1"/>
</dbReference>
<dbReference type="SMART" id="SM00836">
    <property type="entry name" value="DALR_1"/>
    <property type="match status" value="1"/>
</dbReference>
<dbReference type="SUPFAM" id="SSF47323">
    <property type="entry name" value="Anticodon-binding domain of a subclass of class I aminoacyl-tRNA synthetases"/>
    <property type="match status" value="1"/>
</dbReference>
<dbReference type="SUPFAM" id="SSF55190">
    <property type="entry name" value="Arginyl-tRNA synthetase (ArgRS), N-terminal 'additional' domain"/>
    <property type="match status" value="1"/>
</dbReference>
<dbReference type="SUPFAM" id="SSF52374">
    <property type="entry name" value="Nucleotidylyl transferase"/>
    <property type="match status" value="1"/>
</dbReference>
<protein>
    <recommendedName>
        <fullName evidence="1">Arginine--tRNA ligase</fullName>
        <ecNumber evidence="1">6.1.1.19</ecNumber>
    </recommendedName>
    <alternativeName>
        <fullName evidence="1">Arginyl-tRNA synthetase</fullName>
        <shortName evidence="1">ArgRS</shortName>
    </alternativeName>
</protein>
<sequence length="563" mass="62893">MNTKELIAAEIAKVVPELEQENIQNLLEIPKNADMGDLAFPAFSLAKVLRKAPQMIAADIAEKIDASNFEKVEAVGPYINIFLDKSKISADVLGQVIAQGSHYADQNIGNGRNIAFDMSSPNIAKPFSIGHLRSTVIADALANIVAKQGYKPVRINHLGDWGKQFGMLIVAYKKWGSEEAVKANPINELLQLYVRINAEAEEDPSVDEEAREWFRKLEAGDEEATALWQWFRDESLVEFNRLYDELGVSFDSYNGEAFYNDKMDEVVDILTEKGLLQESQGAQVVNLEKYGIEHPALIKKSDGATLYITRDLAAALYRKRTYDFAKAIYVVGNEQSAHFKQLKAVLKEMGYNWSDDMTHVAFGLVTKNGKKLSTRKGNVILLEPTIAEAVNRAQAQIEAKNPNLPNKEAIAHAVGVGAIKFYDLKTDRMNGYDFDLDAMVSFEGETGPYVQYAHARIQSILRKADFTPSADATYSLNDVESWEIIKLLQDFPRIINRASDNFEPSIVAKFAISLAQAFNKYYAHTRILDESPERDSRLALCYATATVLKEALRLLGVEAPDEM</sequence>
<organism>
    <name type="scientific">Streptococcus thermophilus (strain CNRZ 1066)</name>
    <dbReference type="NCBI Taxonomy" id="299768"/>
    <lineage>
        <taxon>Bacteria</taxon>
        <taxon>Bacillati</taxon>
        <taxon>Bacillota</taxon>
        <taxon>Bacilli</taxon>
        <taxon>Lactobacillales</taxon>
        <taxon>Streptococcaceae</taxon>
        <taxon>Streptococcus</taxon>
    </lineage>
</organism>
<reference key="1">
    <citation type="journal article" date="2004" name="Nat. Biotechnol.">
        <title>Complete sequence and comparative genome analysis of the dairy bacterium Streptococcus thermophilus.</title>
        <authorList>
            <person name="Bolotin A."/>
            <person name="Quinquis B."/>
            <person name="Renault P."/>
            <person name="Sorokin A."/>
            <person name="Ehrlich S.D."/>
            <person name="Kulakauskas S."/>
            <person name="Lapidus A."/>
            <person name="Goltsman E."/>
            <person name="Mazur M."/>
            <person name="Pusch G.D."/>
            <person name="Fonstein M."/>
            <person name="Overbeek R."/>
            <person name="Kyprides N."/>
            <person name="Purnelle B."/>
            <person name="Prozzi D."/>
            <person name="Ngui K."/>
            <person name="Masuy D."/>
            <person name="Hancy F."/>
            <person name="Burteau S."/>
            <person name="Boutry M."/>
            <person name="Delcour J."/>
            <person name="Goffeau A."/>
            <person name="Hols P."/>
        </authorList>
    </citation>
    <scope>NUCLEOTIDE SEQUENCE [LARGE SCALE GENOMIC DNA]</scope>
    <source>
        <strain>CNRZ 1066</strain>
    </source>
</reference>